<organism>
    <name type="scientific">Streptococcus pyogenes serotype M2 (strain MGAS10270)</name>
    <dbReference type="NCBI Taxonomy" id="370552"/>
    <lineage>
        <taxon>Bacteria</taxon>
        <taxon>Bacillati</taxon>
        <taxon>Bacillota</taxon>
        <taxon>Bacilli</taxon>
        <taxon>Lactobacillales</taxon>
        <taxon>Streptococcaceae</taxon>
        <taxon>Streptococcus</taxon>
    </lineage>
</organism>
<accession>Q1JHQ6</accession>
<evidence type="ECO:0000255" key="1">
    <source>
        <dbReference type="HAMAP-Rule" id="MF_00318"/>
    </source>
</evidence>
<keyword id="KW-0963">Cytoplasm</keyword>
<keyword id="KW-0324">Glycolysis</keyword>
<keyword id="KW-0456">Lyase</keyword>
<keyword id="KW-0460">Magnesium</keyword>
<keyword id="KW-0479">Metal-binding</keyword>
<keyword id="KW-0964">Secreted</keyword>
<feature type="chain" id="PRO_0000267118" description="Enolase">
    <location>
        <begin position="1"/>
        <end position="435"/>
    </location>
</feature>
<feature type="active site" description="Proton donor" evidence="1">
    <location>
        <position position="205"/>
    </location>
</feature>
<feature type="active site" description="Proton acceptor" evidence="1">
    <location>
        <position position="344"/>
    </location>
</feature>
<feature type="binding site" evidence="1">
    <location>
        <position position="163"/>
    </location>
    <ligand>
        <name>(2R)-2-phosphoglycerate</name>
        <dbReference type="ChEBI" id="CHEBI:58289"/>
    </ligand>
</feature>
<feature type="binding site" evidence="1">
    <location>
        <position position="243"/>
    </location>
    <ligand>
        <name>Mg(2+)</name>
        <dbReference type="ChEBI" id="CHEBI:18420"/>
    </ligand>
</feature>
<feature type="binding site" evidence="1">
    <location>
        <position position="292"/>
    </location>
    <ligand>
        <name>Mg(2+)</name>
        <dbReference type="ChEBI" id="CHEBI:18420"/>
    </ligand>
</feature>
<feature type="binding site" evidence="1">
    <location>
        <position position="319"/>
    </location>
    <ligand>
        <name>Mg(2+)</name>
        <dbReference type="ChEBI" id="CHEBI:18420"/>
    </ligand>
</feature>
<feature type="binding site" evidence="1">
    <location>
        <position position="344"/>
    </location>
    <ligand>
        <name>(2R)-2-phosphoglycerate</name>
        <dbReference type="ChEBI" id="CHEBI:58289"/>
    </ligand>
</feature>
<feature type="binding site" evidence="1">
    <location>
        <position position="373"/>
    </location>
    <ligand>
        <name>(2R)-2-phosphoglycerate</name>
        <dbReference type="ChEBI" id="CHEBI:58289"/>
    </ligand>
</feature>
<feature type="binding site" evidence="1">
    <location>
        <position position="374"/>
    </location>
    <ligand>
        <name>(2R)-2-phosphoglycerate</name>
        <dbReference type="ChEBI" id="CHEBI:58289"/>
    </ligand>
</feature>
<feature type="binding site" evidence="1">
    <location>
        <position position="395"/>
    </location>
    <ligand>
        <name>(2R)-2-phosphoglycerate</name>
        <dbReference type="ChEBI" id="CHEBI:58289"/>
    </ligand>
</feature>
<sequence length="435" mass="47356">MSIITDVYAREVLDSRGNPTLEVEVYTESGAFGRGMVPSGASTGEHEAVELRDGDKSRYLGLGTQKAVDNVNNIIAEAIIGYDVRDQQAIDRAMIALDGTPNKGKLGANAILGVSIAVARAAADYLEVPLYTYLGGFNTKVLPTPMMNIINGGSHSDAPIAFQEFMIMPVGAPTFKEGLRWGAEVFHALKKILKERGLVTAVGDEGGFAPKFEGTEDGVETILKAIEAAGYEAGENGIMIGFDCASSEFYDKERKVYDYTKFEGEGAAVRTSAEQVDYLEELVNKYPIITIEDGMDENDWDGWKVLTERLGKRVQLVGDDFFVTNTEYLARGIKENAANSILIKVNQIGTLTETFEAIEMAKEAGYTAVVSHRSGETEDSTIADIAVATNAGQIKTGSLSRTDRIAKYNQLLRIEDQLGEVAQYKGIKSFYNLKK</sequence>
<name>ENO_STRPD</name>
<proteinExistence type="inferred from homology"/>
<comment type="function">
    <text evidence="1">Catalyzes the reversible conversion of 2-phosphoglycerate (2-PG) into phosphoenolpyruvate (PEP). It is essential for the degradation of carbohydrates via glycolysis.</text>
</comment>
<comment type="catalytic activity">
    <reaction evidence="1">
        <text>(2R)-2-phosphoglycerate = phosphoenolpyruvate + H2O</text>
        <dbReference type="Rhea" id="RHEA:10164"/>
        <dbReference type="ChEBI" id="CHEBI:15377"/>
        <dbReference type="ChEBI" id="CHEBI:58289"/>
        <dbReference type="ChEBI" id="CHEBI:58702"/>
        <dbReference type="EC" id="4.2.1.11"/>
    </reaction>
</comment>
<comment type="cofactor">
    <cofactor evidence="1">
        <name>Mg(2+)</name>
        <dbReference type="ChEBI" id="CHEBI:18420"/>
    </cofactor>
    <text evidence="1">Binds a second Mg(2+) ion via substrate during catalysis.</text>
</comment>
<comment type="pathway">
    <text evidence="1">Carbohydrate degradation; glycolysis; pyruvate from D-glyceraldehyde 3-phosphate: step 4/5.</text>
</comment>
<comment type="subcellular location">
    <subcellularLocation>
        <location evidence="1">Cytoplasm</location>
    </subcellularLocation>
    <subcellularLocation>
        <location evidence="1">Secreted</location>
    </subcellularLocation>
    <subcellularLocation>
        <location evidence="1">Cell surface</location>
    </subcellularLocation>
    <text evidence="1">Fractions of enolase are present in both the cytoplasm and on the cell surface.</text>
</comment>
<comment type="similarity">
    <text evidence="1">Belongs to the enolase family.</text>
</comment>
<reference key="1">
    <citation type="journal article" date="2006" name="Proc. Natl. Acad. Sci. U.S.A.">
        <title>Molecular genetic anatomy of inter- and intraserotype variation in the human bacterial pathogen group A Streptococcus.</title>
        <authorList>
            <person name="Beres S.B."/>
            <person name="Richter E.W."/>
            <person name="Nagiec M.J."/>
            <person name="Sumby P."/>
            <person name="Porcella S.F."/>
            <person name="DeLeo F.R."/>
            <person name="Musser J.M."/>
        </authorList>
    </citation>
    <scope>NUCLEOTIDE SEQUENCE [LARGE SCALE GENOMIC DNA]</scope>
    <source>
        <strain>MGAS10270</strain>
    </source>
</reference>
<protein>
    <recommendedName>
        <fullName evidence="1">Enolase</fullName>
        <ecNumber evidence="1">4.2.1.11</ecNumber>
    </recommendedName>
    <alternativeName>
        <fullName evidence="1">2-phospho-D-glycerate hydro-lyase</fullName>
    </alternativeName>
    <alternativeName>
        <fullName evidence="1">2-phosphoglycerate dehydratase</fullName>
    </alternativeName>
</protein>
<gene>
    <name evidence="1" type="primary">eno</name>
    <name type="ordered locus">MGAS10270_Spy0615</name>
</gene>
<dbReference type="EC" id="4.2.1.11" evidence="1"/>
<dbReference type="EMBL" id="CP000260">
    <property type="protein sequence ID" value="ABF33680.1"/>
    <property type="molecule type" value="Genomic_DNA"/>
</dbReference>
<dbReference type="RefSeq" id="WP_002985288.1">
    <property type="nucleotide sequence ID" value="NZ_CVUH01000002.1"/>
</dbReference>
<dbReference type="SMR" id="Q1JHQ6"/>
<dbReference type="GeneID" id="69901134"/>
<dbReference type="KEGG" id="sph:MGAS10270_Spy0615"/>
<dbReference type="HOGENOM" id="CLU_031223_2_1_9"/>
<dbReference type="UniPathway" id="UPA00109">
    <property type="reaction ID" value="UER00187"/>
</dbReference>
<dbReference type="Proteomes" id="UP000002436">
    <property type="component" value="Chromosome"/>
</dbReference>
<dbReference type="GO" id="GO:0009986">
    <property type="term" value="C:cell surface"/>
    <property type="evidence" value="ECO:0007669"/>
    <property type="project" value="UniProtKB-SubCell"/>
</dbReference>
<dbReference type="GO" id="GO:0005576">
    <property type="term" value="C:extracellular region"/>
    <property type="evidence" value="ECO:0007669"/>
    <property type="project" value="UniProtKB-SubCell"/>
</dbReference>
<dbReference type="GO" id="GO:0009274">
    <property type="term" value="C:peptidoglycan-based cell wall"/>
    <property type="evidence" value="ECO:0000314"/>
    <property type="project" value="CAFA"/>
</dbReference>
<dbReference type="GO" id="GO:0000015">
    <property type="term" value="C:phosphopyruvate hydratase complex"/>
    <property type="evidence" value="ECO:0007669"/>
    <property type="project" value="InterPro"/>
</dbReference>
<dbReference type="GO" id="GO:0000287">
    <property type="term" value="F:magnesium ion binding"/>
    <property type="evidence" value="ECO:0007669"/>
    <property type="project" value="UniProtKB-UniRule"/>
</dbReference>
<dbReference type="GO" id="GO:0004634">
    <property type="term" value="F:phosphopyruvate hydratase activity"/>
    <property type="evidence" value="ECO:0007669"/>
    <property type="project" value="UniProtKB-UniRule"/>
</dbReference>
<dbReference type="GO" id="GO:0006096">
    <property type="term" value="P:glycolytic process"/>
    <property type="evidence" value="ECO:0007669"/>
    <property type="project" value="UniProtKB-UniRule"/>
</dbReference>
<dbReference type="CDD" id="cd03313">
    <property type="entry name" value="enolase"/>
    <property type="match status" value="1"/>
</dbReference>
<dbReference type="FunFam" id="3.20.20.120:FF:000001">
    <property type="entry name" value="Enolase"/>
    <property type="match status" value="1"/>
</dbReference>
<dbReference type="FunFam" id="3.30.390.10:FF:000001">
    <property type="entry name" value="Enolase"/>
    <property type="match status" value="1"/>
</dbReference>
<dbReference type="Gene3D" id="3.20.20.120">
    <property type="entry name" value="Enolase-like C-terminal domain"/>
    <property type="match status" value="1"/>
</dbReference>
<dbReference type="Gene3D" id="3.30.390.10">
    <property type="entry name" value="Enolase-like, N-terminal domain"/>
    <property type="match status" value="1"/>
</dbReference>
<dbReference type="HAMAP" id="MF_00318">
    <property type="entry name" value="Enolase"/>
    <property type="match status" value="1"/>
</dbReference>
<dbReference type="InterPro" id="IPR000941">
    <property type="entry name" value="Enolase"/>
</dbReference>
<dbReference type="InterPro" id="IPR036849">
    <property type="entry name" value="Enolase-like_C_sf"/>
</dbReference>
<dbReference type="InterPro" id="IPR029017">
    <property type="entry name" value="Enolase-like_N"/>
</dbReference>
<dbReference type="InterPro" id="IPR020810">
    <property type="entry name" value="Enolase_C"/>
</dbReference>
<dbReference type="InterPro" id="IPR020809">
    <property type="entry name" value="Enolase_CS"/>
</dbReference>
<dbReference type="InterPro" id="IPR020811">
    <property type="entry name" value="Enolase_N"/>
</dbReference>
<dbReference type="NCBIfam" id="TIGR01060">
    <property type="entry name" value="eno"/>
    <property type="match status" value="1"/>
</dbReference>
<dbReference type="PANTHER" id="PTHR11902">
    <property type="entry name" value="ENOLASE"/>
    <property type="match status" value="1"/>
</dbReference>
<dbReference type="PANTHER" id="PTHR11902:SF1">
    <property type="entry name" value="ENOLASE"/>
    <property type="match status" value="1"/>
</dbReference>
<dbReference type="Pfam" id="PF00113">
    <property type="entry name" value="Enolase_C"/>
    <property type="match status" value="1"/>
</dbReference>
<dbReference type="Pfam" id="PF03952">
    <property type="entry name" value="Enolase_N"/>
    <property type="match status" value="1"/>
</dbReference>
<dbReference type="PIRSF" id="PIRSF001400">
    <property type="entry name" value="Enolase"/>
    <property type="match status" value="1"/>
</dbReference>
<dbReference type="PRINTS" id="PR00148">
    <property type="entry name" value="ENOLASE"/>
</dbReference>
<dbReference type="SFLD" id="SFLDS00001">
    <property type="entry name" value="Enolase"/>
    <property type="match status" value="1"/>
</dbReference>
<dbReference type="SFLD" id="SFLDF00002">
    <property type="entry name" value="enolase"/>
    <property type="match status" value="1"/>
</dbReference>
<dbReference type="SMART" id="SM01192">
    <property type="entry name" value="Enolase_C"/>
    <property type="match status" value="1"/>
</dbReference>
<dbReference type="SMART" id="SM01193">
    <property type="entry name" value="Enolase_N"/>
    <property type="match status" value="1"/>
</dbReference>
<dbReference type="SUPFAM" id="SSF51604">
    <property type="entry name" value="Enolase C-terminal domain-like"/>
    <property type="match status" value="1"/>
</dbReference>
<dbReference type="SUPFAM" id="SSF54826">
    <property type="entry name" value="Enolase N-terminal domain-like"/>
    <property type="match status" value="1"/>
</dbReference>
<dbReference type="PROSITE" id="PS00164">
    <property type="entry name" value="ENOLASE"/>
    <property type="match status" value="1"/>
</dbReference>